<name>LEU3_LISIN</name>
<feature type="chain" id="PRO_0000083704" description="3-isopropylmalate dehydrogenase">
    <location>
        <begin position="1"/>
        <end position="350"/>
    </location>
</feature>
<feature type="binding site" evidence="1">
    <location>
        <begin position="76"/>
        <end position="87"/>
    </location>
    <ligand>
        <name>NAD(+)</name>
        <dbReference type="ChEBI" id="CHEBI:57540"/>
    </ligand>
</feature>
<feature type="binding site" evidence="1">
    <location>
        <position position="94"/>
    </location>
    <ligand>
        <name>substrate</name>
    </ligand>
</feature>
<feature type="binding site" evidence="1">
    <location>
        <position position="104"/>
    </location>
    <ligand>
        <name>substrate</name>
    </ligand>
</feature>
<feature type="binding site" evidence="1">
    <location>
        <position position="132"/>
    </location>
    <ligand>
        <name>substrate</name>
    </ligand>
</feature>
<feature type="binding site" evidence="1">
    <location>
        <position position="217"/>
    </location>
    <ligand>
        <name>Mg(2+)</name>
        <dbReference type="ChEBI" id="CHEBI:18420"/>
    </ligand>
</feature>
<feature type="binding site" evidence="1">
    <location>
        <position position="217"/>
    </location>
    <ligand>
        <name>substrate</name>
    </ligand>
</feature>
<feature type="binding site" evidence="1">
    <location>
        <position position="241"/>
    </location>
    <ligand>
        <name>Mg(2+)</name>
        <dbReference type="ChEBI" id="CHEBI:18420"/>
    </ligand>
</feature>
<feature type="binding site" evidence="1">
    <location>
        <position position="245"/>
    </location>
    <ligand>
        <name>Mg(2+)</name>
        <dbReference type="ChEBI" id="CHEBI:18420"/>
    </ligand>
</feature>
<feature type="binding site" evidence="1">
    <location>
        <begin position="275"/>
        <end position="287"/>
    </location>
    <ligand>
        <name>NAD(+)</name>
        <dbReference type="ChEBI" id="CHEBI:57540"/>
    </ligand>
</feature>
<feature type="site" description="Important for catalysis" evidence="1">
    <location>
        <position position="139"/>
    </location>
</feature>
<feature type="site" description="Important for catalysis" evidence="1">
    <location>
        <position position="185"/>
    </location>
</feature>
<evidence type="ECO:0000255" key="1">
    <source>
        <dbReference type="HAMAP-Rule" id="MF_01033"/>
    </source>
</evidence>
<reference key="1">
    <citation type="journal article" date="2001" name="Science">
        <title>Comparative genomics of Listeria species.</title>
        <authorList>
            <person name="Glaser P."/>
            <person name="Frangeul L."/>
            <person name="Buchrieser C."/>
            <person name="Rusniok C."/>
            <person name="Amend A."/>
            <person name="Baquero F."/>
            <person name="Berche P."/>
            <person name="Bloecker H."/>
            <person name="Brandt P."/>
            <person name="Chakraborty T."/>
            <person name="Charbit A."/>
            <person name="Chetouani F."/>
            <person name="Couve E."/>
            <person name="de Daruvar A."/>
            <person name="Dehoux P."/>
            <person name="Domann E."/>
            <person name="Dominguez-Bernal G."/>
            <person name="Duchaud E."/>
            <person name="Durant L."/>
            <person name="Dussurget O."/>
            <person name="Entian K.-D."/>
            <person name="Fsihi H."/>
            <person name="Garcia-del Portillo F."/>
            <person name="Garrido P."/>
            <person name="Gautier L."/>
            <person name="Goebel W."/>
            <person name="Gomez-Lopez N."/>
            <person name="Hain T."/>
            <person name="Hauf J."/>
            <person name="Jackson D."/>
            <person name="Jones L.-M."/>
            <person name="Kaerst U."/>
            <person name="Kreft J."/>
            <person name="Kuhn M."/>
            <person name="Kunst F."/>
            <person name="Kurapkat G."/>
            <person name="Madueno E."/>
            <person name="Maitournam A."/>
            <person name="Mata Vicente J."/>
            <person name="Ng E."/>
            <person name="Nedjari H."/>
            <person name="Nordsiek G."/>
            <person name="Novella S."/>
            <person name="de Pablos B."/>
            <person name="Perez-Diaz J.-C."/>
            <person name="Purcell R."/>
            <person name="Remmel B."/>
            <person name="Rose M."/>
            <person name="Schlueter T."/>
            <person name="Simoes N."/>
            <person name="Tierrez A."/>
            <person name="Vazquez-Boland J.-A."/>
            <person name="Voss H."/>
            <person name="Wehland J."/>
            <person name="Cossart P."/>
        </authorList>
    </citation>
    <scope>NUCLEOTIDE SEQUENCE [LARGE SCALE GENOMIC DNA]</scope>
    <source>
        <strain>ATCC BAA-680 / CLIP 11262</strain>
    </source>
</reference>
<comment type="function">
    <text evidence="1">Catalyzes the oxidation of 3-carboxy-2-hydroxy-4-methylpentanoate (3-isopropylmalate) to 3-carboxy-4-methyl-2-oxopentanoate. The product decarboxylates to 4-methyl-2 oxopentanoate.</text>
</comment>
<comment type="catalytic activity">
    <reaction evidence="1">
        <text>(2R,3S)-3-isopropylmalate + NAD(+) = 4-methyl-2-oxopentanoate + CO2 + NADH</text>
        <dbReference type="Rhea" id="RHEA:32271"/>
        <dbReference type="ChEBI" id="CHEBI:16526"/>
        <dbReference type="ChEBI" id="CHEBI:17865"/>
        <dbReference type="ChEBI" id="CHEBI:35121"/>
        <dbReference type="ChEBI" id="CHEBI:57540"/>
        <dbReference type="ChEBI" id="CHEBI:57945"/>
        <dbReference type="EC" id="1.1.1.85"/>
    </reaction>
</comment>
<comment type="cofactor">
    <cofactor evidence="1">
        <name>Mg(2+)</name>
        <dbReference type="ChEBI" id="CHEBI:18420"/>
    </cofactor>
    <cofactor evidence="1">
        <name>Mn(2+)</name>
        <dbReference type="ChEBI" id="CHEBI:29035"/>
    </cofactor>
    <text evidence="1">Binds 1 Mg(2+) or Mn(2+) ion per subunit.</text>
</comment>
<comment type="pathway">
    <text evidence="1">Amino-acid biosynthesis; L-leucine biosynthesis; L-leucine from 3-methyl-2-oxobutanoate: step 3/4.</text>
</comment>
<comment type="subunit">
    <text evidence="1">Homodimer.</text>
</comment>
<comment type="subcellular location">
    <subcellularLocation>
        <location evidence="1">Cytoplasm</location>
    </subcellularLocation>
</comment>
<comment type="similarity">
    <text evidence="1">Belongs to the isocitrate and isopropylmalate dehydrogenases family. LeuB type 1 subfamily.</text>
</comment>
<accession>Q92A27</accession>
<protein>
    <recommendedName>
        <fullName evidence="1">3-isopropylmalate dehydrogenase</fullName>
        <ecNumber evidence="1">1.1.1.85</ecNumber>
    </recommendedName>
    <alternativeName>
        <fullName evidence="1">3-IPM-DH</fullName>
    </alternativeName>
    <alternativeName>
        <fullName evidence="1">Beta-IPM dehydrogenase</fullName>
        <shortName evidence="1">IMDH</shortName>
    </alternativeName>
</protein>
<dbReference type="EC" id="1.1.1.85" evidence="1"/>
<dbReference type="EMBL" id="AL596171">
    <property type="protein sequence ID" value="CAC97325.1"/>
    <property type="molecule type" value="Genomic_DNA"/>
</dbReference>
<dbReference type="PIR" id="AE1694">
    <property type="entry name" value="AE1694"/>
</dbReference>
<dbReference type="RefSeq" id="WP_010991747.1">
    <property type="nucleotide sequence ID" value="NC_003212.1"/>
</dbReference>
<dbReference type="SMR" id="Q92A27"/>
<dbReference type="STRING" id="272626.gene:17566453"/>
<dbReference type="KEGG" id="lin:leuB"/>
<dbReference type="eggNOG" id="COG0473">
    <property type="taxonomic scope" value="Bacteria"/>
</dbReference>
<dbReference type="HOGENOM" id="CLU_031953_0_3_9"/>
<dbReference type="OrthoDB" id="9806254at2"/>
<dbReference type="UniPathway" id="UPA00048">
    <property type="reaction ID" value="UER00072"/>
</dbReference>
<dbReference type="Proteomes" id="UP000002513">
    <property type="component" value="Chromosome"/>
</dbReference>
<dbReference type="GO" id="GO:0005829">
    <property type="term" value="C:cytosol"/>
    <property type="evidence" value="ECO:0007669"/>
    <property type="project" value="TreeGrafter"/>
</dbReference>
<dbReference type="GO" id="GO:0003862">
    <property type="term" value="F:3-isopropylmalate dehydrogenase activity"/>
    <property type="evidence" value="ECO:0007669"/>
    <property type="project" value="UniProtKB-UniRule"/>
</dbReference>
<dbReference type="GO" id="GO:0000287">
    <property type="term" value="F:magnesium ion binding"/>
    <property type="evidence" value="ECO:0007669"/>
    <property type="project" value="InterPro"/>
</dbReference>
<dbReference type="GO" id="GO:0051287">
    <property type="term" value="F:NAD binding"/>
    <property type="evidence" value="ECO:0007669"/>
    <property type="project" value="InterPro"/>
</dbReference>
<dbReference type="GO" id="GO:0009098">
    <property type="term" value="P:L-leucine biosynthetic process"/>
    <property type="evidence" value="ECO:0007669"/>
    <property type="project" value="UniProtKB-UniRule"/>
</dbReference>
<dbReference type="FunFam" id="3.40.718.10:FF:000006">
    <property type="entry name" value="3-isopropylmalate dehydrogenase"/>
    <property type="match status" value="1"/>
</dbReference>
<dbReference type="Gene3D" id="3.40.718.10">
    <property type="entry name" value="Isopropylmalate Dehydrogenase"/>
    <property type="match status" value="1"/>
</dbReference>
<dbReference type="HAMAP" id="MF_01033">
    <property type="entry name" value="LeuB_type1"/>
    <property type="match status" value="1"/>
</dbReference>
<dbReference type="InterPro" id="IPR019818">
    <property type="entry name" value="IsoCit/isopropylmalate_DH_CS"/>
</dbReference>
<dbReference type="InterPro" id="IPR024084">
    <property type="entry name" value="IsoPropMal-DH-like_dom"/>
</dbReference>
<dbReference type="InterPro" id="IPR004429">
    <property type="entry name" value="Isopropylmalate_DH"/>
</dbReference>
<dbReference type="NCBIfam" id="TIGR00169">
    <property type="entry name" value="leuB"/>
    <property type="match status" value="1"/>
</dbReference>
<dbReference type="PANTHER" id="PTHR42979">
    <property type="entry name" value="3-ISOPROPYLMALATE DEHYDROGENASE"/>
    <property type="match status" value="1"/>
</dbReference>
<dbReference type="PANTHER" id="PTHR42979:SF1">
    <property type="entry name" value="3-ISOPROPYLMALATE DEHYDROGENASE"/>
    <property type="match status" value="1"/>
</dbReference>
<dbReference type="Pfam" id="PF00180">
    <property type="entry name" value="Iso_dh"/>
    <property type="match status" value="1"/>
</dbReference>
<dbReference type="SMART" id="SM01329">
    <property type="entry name" value="Iso_dh"/>
    <property type="match status" value="1"/>
</dbReference>
<dbReference type="SUPFAM" id="SSF53659">
    <property type="entry name" value="Isocitrate/Isopropylmalate dehydrogenase-like"/>
    <property type="match status" value="1"/>
</dbReference>
<dbReference type="PROSITE" id="PS00470">
    <property type="entry name" value="IDH_IMDH"/>
    <property type="match status" value="1"/>
</dbReference>
<organism>
    <name type="scientific">Listeria innocua serovar 6a (strain ATCC BAA-680 / CLIP 11262)</name>
    <dbReference type="NCBI Taxonomy" id="272626"/>
    <lineage>
        <taxon>Bacteria</taxon>
        <taxon>Bacillati</taxon>
        <taxon>Bacillota</taxon>
        <taxon>Bacilli</taxon>
        <taxon>Bacillales</taxon>
        <taxon>Listeriaceae</taxon>
        <taxon>Listeria</taxon>
    </lineage>
</organism>
<sequence>MAYKITSLAGDGIGPEIMASGIKILEAIAAKYNHTFEIESHPFGGAGIDAAGDPIPPETLKACQNADAILLGAIGGPKWDNAPKRPEDGLLALRKALGLFANIRPIQVPSSITHLSPLKKEIVENTDFVVVRELTGGLYFGEPKHWDDVAAVDSLTYTRVEIERIIEKAFEIASTRNKKVTSVDKANVLASSKLWRKIAEEVASRHPDITLEHLYVDAAAMLMIQRPTTFDVIVTENLFGDILSDEASVITGSLGMLPSASHAENGPSLYEPIHGSAPDIANQNIANPMSMISSVSMMLRQSFSLFKEADAIDAATARTMQAGFLTADLGGNTSTTDFTNEVLKQIEGGE</sequence>
<keyword id="KW-0028">Amino-acid biosynthesis</keyword>
<keyword id="KW-0100">Branched-chain amino acid biosynthesis</keyword>
<keyword id="KW-0963">Cytoplasm</keyword>
<keyword id="KW-0432">Leucine biosynthesis</keyword>
<keyword id="KW-0460">Magnesium</keyword>
<keyword id="KW-0464">Manganese</keyword>
<keyword id="KW-0479">Metal-binding</keyword>
<keyword id="KW-0520">NAD</keyword>
<keyword id="KW-0560">Oxidoreductase</keyword>
<gene>
    <name evidence="1" type="primary">leuB</name>
    <name type="ordered locus">lin2095</name>
</gene>
<proteinExistence type="inferred from homology"/>